<gene>
    <name evidence="1" type="primary">rnp4</name>
    <name type="ordered locus">MK1622</name>
</gene>
<protein>
    <recommendedName>
        <fullName evidence="1">Ribonuclease P protein component 4</fullName>
        <shortName evidence="1">RNase P component 4</shortName>
        <ecNumber evidence="1">3.1.26.5</ecNumber>
    </recommendedName>
    <alternativeName>
        <fullName evidence="1">Rpp21</fullName>
    </alternativeName>
</protein>
<reference key="1">
    <citation type="journal article" date="2002" name="Proc. Natl. Acad. Sci. U.S.A.">
        <title>The complete genome of hyperthermophile Methanopyrus kandleri AV19 and monophyly of archaeal methanogens.</title>
        <authorList>
            <person name="Slesarev A.I."/>
            <person name="Mezhevaya K.V."/>
            <person name="Makarova K.S."/>
            <person name="Polushin N.N."/>
            <person name="Shcherbinina O.V."/>
            <person name="Shakhova V.V."/>
            <person name="Belova G.I."/>
            <person name="Aravind L."/>
            <person name="Natale D.A."/>
            <person name="Rogozin I.B."/>
            <person name="Tatusov R.L."/>
            <person name="Wolf Y.I."/>
            <person name="Stetter K.O."/>
            <person name="Malykh A.G."/>
            <person name="Koonin E.V."/>
            <person name="Kozyavkin S.A."/>
        </authorList>
    </citation>
    <scope>NUCLEOTIDE SEQUENCE [LARGE SCALE GENOMIC DNA]</scope>
    <source>
        <strain>AV19 / DSM 6324 / JCM 9639 / NBRC 100938</strain>
    </source>
</reference>
<evidence type="ECO:0000255" key="1">
    <source>
        <dbReference type="HAMAP-Rule" id="MF_00757"/>
    </source>
</evidence>
<organism>
    <name type="scientific">Methanopyrus kandleri (strain AV19 / DSM 6324 / JCM 9639 / NBRC 100938)</name>
    <dbReference type="NCBI Taxonomy" id="190192"/>
    <lineage>
        <taxon>Archaea</taxon>
        <taxon>Methanobacteriati</taxon>
        <taxon>Methanobacteriota</taxon>
        <taxon>Methanomada group</taxon>
        <taxon>Methanopyri</taxon>
        <taxon>Methanopyrales</taxon>
        <taxon>Methanopyraceae</taxon>
        <taxon>Methanopyrus</taxon>
    </lineage>
</organism>
<comment type="function">
    <text evidence="1">Part of ribonuclease P, a protein complex that generates mature tRNA molecules by cleaving their 5'-ends.</text>
</comment>
<comment type="catalytic activity">
    <reaction evidence="1">
        <text>Endonucleolytic cleavage of RNA, removing 5'-extranucleotides from tRNA precursor.</text>
        <dbReference type="EC" id="3.1.26.5"/>
    </reaction>
</comment>
<comment type="cofactor">
    <cofactor evidence="1">
        <name>Zn(2+)</name>
        <dbReference type="ChEBI" id="CHEBI:29105"/>
    </cofactor>
    <text evidence="1">Binds 1 zinc ion per subunit.</text>
</comment>
<comment type="subunit">
    <text evidence="1">Consists of a catalytic RNA component and at least 4-5 protein subunits.</text>
</comment>
<comment type="subcellular location">
    <subcellularLocation>
        <location evidence="1">Cytoplasm</location>
    </subcellularLocation>
</comment>
<comment type="similarity">
    <text evidence="1">Belongs to the eukaryotic/archaeal RNase P protein component 4 family.</text>
</comment>
<feature type="chain" id="PRO_0000153853" description="Ribonuclease P protein component 4">
    <location>
        <begin position="1"/>
        <end position="128"/>
    </location>
</feature>
<feature type="binding site" evidence="1">
    <location>
        <position position="67"/>
    </location>
    <ligand>
        <name>Zn(2+)</name>
        <dbReference type="ChEBI" id="CHEBI:29105"/>
    </ligand>
</feature>
<feature type="binding site" evidence="1">
    <location>
        <position position="70"/>
    </location>
    <ligand>
        <name>Zn(2+)</name>
        <dbReference type="ChEBI" id="CHEBI:29105"/>
    </ligand>
</feature>
<feature type="binding site" evidence="1">
    <location>
        <position position="96"/>
    </location>
    <ligand>
        <name>Zn(2+)</name>
        <dbReference type="ChEBI" id="CHEBI:29105"/>
    </ligand>
</feature>
<feature type="binding site" evidence="1">
    <location>
        <position position="99"/>
    </location>
    <ligand>
        <name>Zn(2+)</name>
        <dbReference type="ChEBI" id="CHEBI:29105"/>
    </ligand>
</feature>
<sequence length="128" mass="15309">MCKVESPRSGVLLLRRIALERAERLLRLARTVYYEDPDRARRYVELARRIAMKARVKLPKHLKRSFCKRCNTPLIPGVTARVRLRQNRMPHVSVTCLECGYIYRYPYLREVKERRRRHMEGVKDRDAG</sequence>
<proteinExistence type="inferred from homology"/>
<accession>Q8TGY1</accession>
<keyword id="KW-0963">Cytoplasm</keyword>
<keyword id="KW-0255">Endonuclease</keyword>
<keyword id="KW-0378">Hydrolase</keyword>
<keyword id="KW-0479">Metal-binding</keyword>
<keyword id="KW-0540">Nuclease</keyword>
<keyword id="KW-1185">Reference proteome</keyword>
<keyword id="KW-0819">tRNA processing</keyword>
<keyword id="KW-0862">Zinc</keyword>
<dbReference type="EC" id="3.1.26.5" evidence="1"/>
<dbReference type="EMBL" id="AE009439">
    <property type="protein sequence ID" value="AAM02835.1"/>
    <property type="molecule type" value="Genomic_DNA"/>
</dbReference>
<dbReference type="RefSeq" id="WP_011019990.1">
    <property type="nucleotide sequence ID" value="NC_003551.1"/>
</dbReference>
<dbReference type="SMR" id="Q8TGY1"/>
<dbReference type="STRING" id="190192.MK1622"/>
<dbReference type="PaxDb" id="190192-MK1622"/>
<dbReference type="EnsemblBacteria" id="AAM02835">
    <property type="protein sequence ID" value="AAM02835"/>
    <property type="gene ID" value="MK1622"/>
</dbReference>
<dbReference type="GeneID" id="1478217"/>
<dbReference type="KEGG" id="mka:MK1622"/>
<dbReference type="PATRIC" id="fig|190192.8.peg.1785"/>
<dbReference type="HOGENOM" id="CLU_079140_3_1_2"/>
<dbReference type="InParanoid" id="Q8TGY1"/>
<dbReference type="OrthoDB" id="10058at2157"/>
<dbReference type="Proteomes" id="UP000001826">
    <property type="component" value="Chromosome"/>
</dbReference>
<dbReference type="GO" id="GO:0005737">
    <property type="term" value="C:cytoplasm"/>
    <property type="evidence" value="ECO:0007669"/>
    <property type="project" value="UniProtKB-SubCell"/>
</dbReference>
<dbReference type="GO" id="GO:0030677">
    <property type="term" value="C:ribonuclease P complex"/>
    <property type="evidence" value="ECO:0007669"/>
    <property type="project" value="UniProtKB-UniRule"/>
</dbReference>
<dbReference type="GO" id="GO:0004526">
    <property type="term" value="F:ribonuclease P activity"/>
    <property type="evidence" value="ECO:0007669"/>
    <property type="project" value="UniProtKB-UniRule"/>
</dbReference>
<dbReference type="GO" id="GO:0008270">
    <property type="term" value="F:zinc ion binding"/>
    <property type="evidence" value="ECO:0007669"/>
    <property type="project" value="UniProtKB-UniRule"/>
</dbReference>
<dbReference type="GO" id="GO:0001682">
    <property type="term" value="P:tRNA 5'-leader removal"/>
    <property type="evidence" value="ECO:0007669"/>
    <property type="project" value="UniProtKB-UniRule"/>
</dbReference>
<dbReference type="Gene3D" id="6.20.50.20">
    <property type="match status" value="1"/>
</dbReference>
<dbReference type="Gene3D" id="1.20.5.420">
    <property type="entry name" value="Immunoglobulin FC, subunit C"/>
    <property type="match status" value="1"/>
</dbReference>
<dbReference type="HAMAP" id="MF_00757">
    <property type="entry name" value="RNase_P_4"/>
    <property type="match status" value="1"/>
</dbReference>
<dbReference type="InterPro" id="IPR016432">
    <property type="entry name" value="RNP4"/>
</dbReference>
<dbReference type="InterPro" id="IPR007175">
    <property type="entry name" value="Rpr2/Snm1/Rpp21"/>
</dbReference>
<dbReference type="NCBIfam" id="NF003045">
    <property type="entry name" value="PRK03954.1"/>
    <property type="match status" value="1"/>
</dbReference>
<dbReference type="PANTHER" id="PTHR14742:SF0">
    <property type="entry name" value="RIBONUCLEASE P PROTEIN SUBUNIT P21"/>
    <property type="match status" value="1"/>
</dbReference>
<dbReference type="PANTHER" id="PTHR14742">
    <property type="entry name" value="RIBONUCLEASE P SUBUNIT P21"/>
    <property type="match status" value="1"/>
</dbReference>
<dbReference type="Pfam" id="PF04032">
    <property type="entry name" value="Rpr2"/>
    <property type="match status" value="1"/>
</dbReference>
<dbReference type="PIRSF" id="PIRSF004878">
    <property type="entry name" value="RNase_P_4"/>
    <property type="match status" value="1"/>
</dbReference>
<name>RNP4_METKA</name>